<reference key="1">
    <citation type="submission" date="2003-06" db="EMBL/GenBank/DDBJ databases">
        <title>Phylogenetic analysis of Malvaceae sensu lato based on chloroplast and nuclear DNA sequences.</title>
        <authorList>
            <person name="Nyffeler R."/>
            <person name="Yen A."/>
            <person name="Alverson W.S."/>
            <person name="Bayer C."/>
            <person name="Blattner F."/>
            <person name="Whitlock B."/>
            <person name="Chase M.W."/>
            <person name="Baum D.A."/>
        </authorList>
    </citation>
    <scope>NUCLEOTIDE SEQUENCE [GENOMIC DNA]</scope>
</reference>
<keyword id="KW-0150">Chloroplast</keyword>
<keyword id="KW-0507">mRNA processing</keyword>
<keyword id="KW-0934">Plastid</keyword>
<keyword id="KW-0694">RNA-binding</keyword>
<keyword id="KW-0819">tRNA processing</keyword>
<dbReference type="EMBL" id="AY321163">
    <property type="protein sequence ID" value="AAQ84245.1"/>
    <property type="molecule type" value="Genomic_DNA"/>
</dbReference>
<dbReference type="GO" id="GO:0009507">
    <property type="term" value="C:chloroplast"/>
    <property type="evidence" value="ECO:0007669"/>
    <property type="project" value="UniProtKB-SubCell"/>
</dbReference>
<dbReference type="GO" id="GO:0003723">
    <property type="term" value="F:RNA binding"/>
    <property type="evidence" value="ECO:0007669"/>
    <property type="project" value="UniProtKB-KW"/>
</dbReference>
<dbReference type="GO" id="GO:0006397">
    <property type="term" value="P:mRNA processing"/>
    <property type="evidence" value="ECO:0007669"/>
    <property type="project" value="UniProtKB-KW"/>
</dbReference>
<dbReference type="GO" id="GO:0008380">
    <property type="term" value="P:RNA splicing"/>
    <property type="evidence" value="ECO:0007669"/>
    <property type="project" value="UniProtKB-UniRule"/>
</dbReference>
<dbReference type="GO" id="GO:0008033">
    <property type="term" value="P:tRNA processing"/>
    <property type="evidence" value="ECO:0007669"/>
    <property type="project" value="UniProtKB-KW"/>
</dbReference>
<dbReference type="HAMAP" id="MF_01390">
    <property type="entry name" value="MatK"/>
    <property type="match status" value="1"/>
</dbReference>
<dbReference type="InterPro" id="IPR024937">
    <property type="entry name" value="Domain_X"/>
</dbReference>
<dbReference type="InterPro" id="IPR002866">
    <property type="entry name" value="Maturase_MatK"/>
</dbReference>
<dbReference type="InterPro" id="IPR024942">
    <property type="entry name" value="Maturase_MatK_N"/>
</dbReference>
<dbReference type="PANTHER" id="PTHR34811">
    <property type="entry name" value="MATURASE K"/>
    <property type="match status" value="1"/>
</dbReference>
<dbReference type="PANTHER" id="PTHR34811:SF1">
    <property type="entry name" value="MATURASE K"/>
    <property type="match status" value="1"/>
</dbReference>
<dbReference type="Pfam" id="PF01348">
    <property type="entry name" value="Intron_maturas2"/>
    <property type="match status" value="1"/>
</dbReference>
<dbReference type="Pfam" id="PF01824">
    <property type="entry name" value="MatK_N"/>
    <property type="match status" value="1"/>
</dbReference>
<accession>Q6EIK1</accession>
<comment type="function">
    <text evidence="1">Usually encoded in the trnK tRNA gene intron. Probably assists in splicing its own and other chloroplast group II introns.</text>
</comment>
<comment type="subcellular location">
    <subcellularLocation>
        <location>Plastid</location>
        <location>Chloroplast</location>
    </subcellularLocation>
</comment>
<comment type="similarity">
    <text evidence="1">Belongs to the intron maturase 2 family. MatK subfamily.</text>
</comment>
<geneLocation type="chloroplast"/>
<evidence type="ECO:0000255" key="1">
    <source>
        <dbReference type="HAMAP-Rule" id="MF_01390"/>
    </source>
</evidence>
<organism>
    <name type="scientific">Pentaplaris doroteae</name>
    <dbReference type="NCBI Taxonomy" id="82418"/>
    <lineage>
        <taxon>Eukaryota</taxon>
        <taxon>Viridiplantae</taxon>
        <taxon>Streptophyta</taxon>
        <taxon>Embryophyta</taxon>
        <taxon>Tracheophyta</taxon>
        <taxon>Spermatophyta</taxon>
        <taxon>Magnoliopsida</taxon>
        <taxon>eudicotyledons</taxon>
        <taxon>Gunneridae</taxon>
        <taxon>Pentapetalae</taxon>
        <taxon>rosids</taxon>
        <taxon>malvids</taxon>
        <taxon>Malvales</taxon>
        <taxon>Malvaceae</taxon>
        <taxon>Bombacoideae</taxon>
        <taxon>Pentaplaris</taxon>
    </lineage>
</organism>
<sequence>MEEFQVYLELNRSRRHDFLYPLIFREYIYALAHDHGLNKSMIFLENQGYGNKFSSLIVKRLIIRMDQQNHLIISANDSNQNPFFGHNNNLYSQMISAGFAVIVEIPFSLRLVSYSQGEEVAKSHNLQSIHSIFPFLEDKFSHLNYVLDVLIPHPIHLEILVQALRYWVKDASSLHLLRFSLYEYCNLKSFITPKKSISIFNPRLFLFLYNSHACEYESIFLFLRNQSSHLRSTSSGVFLERIYFYGKIEYLVEVFYNDFQNNLWLFKDPFIHFIRYQGKAILASKDTSLLMNKWKYYFVDLWQYYFYMWSQSGRVRINQLSKYSLDFLGYLSSVRLNPSAVRSQMLENSFIIDNAMKTLDTRIPIISLIGSLSKAKFCNTLGHPISKPTWADSSDSDIIDRFVRICRNLSHYHSGSSKKKSLYRIKYILRFSCVKTLARKHKSTVRAFLKRLGSEFLEEFFTETEEEHVFSLIFPRGFFTLRKLYRGRIWYLDIICINALVNHE</sequence>
<name>MATK_PENDO</name>
<protein>
    <recommendedName>
        <fullName evidence="1">Maturase K</fullName>
    </recommendedName>
    <alternativeName>
        <fullName evidence="1">Intron maturase</fullName>
    </alternativeName>
</protein>
<proteinExistence type="inferred from homology"/>
<gene>
    <name evidence="1" type="primary">matK</name>
</gene>
<feature type="chain" id="PRO_0000143580" description="Maturase K">
    <location>
        <begin position="1"/>
        <end position="504"/>
    </location>
</feature>